<evidence type="ECO:0000250" key="1"/>
<evidence type="ECO:0000250" key="2">
    <source>
        <dbReference type="UniProtKB" id="P03345"/>
    </source>
</evidence>
<evidence type="ECO:0000250" key="3">
    <source>
        <dbReference type="UniProtKB" id="P03362"/>
    </source>
</evidence>
<evidence type="ECO:0000250" key="4">
    <source>
        <dbReference type="UniProtKB" id="P03363"/>
    </source>
</evidence>
<evidence type="ECO:0000255" key="5"/>
<evidence type="ECO:0000255" key="6">
    <source>
        <dbReference type="PROSITE-ProRule" id="PRU00047"/>
    </source>
</evidence>
<evidence type="ECO:0000255" key="7">
    <source>
        <dbReference type="PROSITE-ProRule" id="PRU00275"/>
    </source>
</evidence>
<evidence type="ECO:0000255" key="8">
    <source>
        <dbReference type="PROSITE-ProRule" id="PRU00405"/>
    </source>
</evidence>
<evidence type="ECO:0000255" key="9">
    <source>
        <dbReference type="PROSITE-ProRule" id="PRU00408"/>
    </source>
</evidence>
<evidence type="ECO:0000255" key="10">
    <source>
        <dbReference type="PROSITE-ProRule" id="PRU00457"/>
    </source>
</evidence>
<evidence type="ECO:0000255" key="11">
    <source>
        <dbReference type="PROSITE-ProRule" id="PRU00506"/>
    </source>
</evidence>
<evidence type="ECO:0000269" key="12">
    <source>
    </source>
</evidence>
<evidence type="ECO:0000269" key="13">
    <source>
    </source>
</evidence>
<evidence type="ECO:0000305" key="14"/>
<proteinExistence type="evidence at protein level"/>
<accession>P25059</accession>
<feature type="initiator methionine" description="Removed; by host" evidence="5">
    <location>
        <position position="1"/>
    </location>
</feature>
<feature type="chain" id="PRO_0000125481" description="Gag-Pro-Pol polyprotein">
    <location>
        <begin position="2"/>
        <end position="1416"/>
    </location>
</feature>
<feature type="chain" id="PRO_0000442552" description="Matrix protein p15">
    <location>
        <begin position="2"/>
        <end position="109"/>
    </location>
</feature>
<feature type="chain" id="PRO_0000442553" description="Capsid protein p24">
    <location>
        <begin position="110"/>
        <end position="323"/>
    </location>
</feature>
<feature type="chain" id="PRO_0000442554" description="Nucleocapsid protein p12-pro">
    <location>
        <begin position="324"/>
        <end position="419"/>
    </location>
</feature>
<feature type="chain" id="PRO_0000442555" description="Protease">
    <location>
        <begin position="420"/>
        <end position="545"/>
    </location>
</feature>
<feature type="chain" id="PRO_0000442556" description="Reverse transcriptase/ribonuclease H">
    <location>
        <begin position="546"/>
        <end position="1120"/>
    </location>
</feature>
<feature type="chain" id="PRO_0000442557" description="Integrase">
    <location>
        <begin position="1121"/>
        <end position="1416"/>
    </location>
</feature>
<feature type="domain" description="Peptidase A2" evidence="7">
    <location>
        <begin position="447"/>
        <end position="525"/>
    </location>
</feature>
<feature type="domain" description="Reverse transcriptase" evidence="8">
    <location>
        <begin position="586"/>
        <end position="776"/>
    </location>
</feature>
<feature type="domain" description="RNase H type-1" evidence="9">
    <location>
        <begin position="996"/>
        <end position="1126"/>
    </location>
</feature>
<feature type="domain" description="Integrase catalytic" evidence="10">
    <location>
        <begin position="1179"/>
        <end position="1343"/>
    </location>
</feature>
<feature type="zinc finger region" description="CCHC-type 1" evidence="6">
    <location>
        <begin position="345"/>
        <end position="362"/>
    </location>
</feature>
<feature type="zinc finger region" description="CCHC-type 2" evidence="6">
    <location>
        <begin position="370"/>
        <end position="387"/>
    </location>
</feature>
<feature type="DNA-binding region" description="Integrase-type" evidence="11">
    <location>
        <begin position="1352"/>
        <end position="1400"/>
    </location>
</feature>
<feature type="short sequence motif" description="PPXY motif" evidence="12">
    <location>
        <begin position="100"/>
        <end position="103"/>
    </location>
</feature>
<feature type="active site" description="Protease; shared with dimeric partner" evidence="7">
    <location>
        <position position="452"/>
    </location>
</feature>
<feature type="binding site" evidence="8">
    <location>
        <position position="652"/>
    </location>
    <ligand>
        <name>Mg(2+)</name>
        <dbReference type="ChEBI" id="CHEBI:18420"/>
        <label>1</label>
        <note>catalytic</note>
    </ligand>
</feature>
<feature type="binding site" evidence="8">
    <location>
        <position position="727"/>
    </location>
    <ligand>
        <name>Mg(2+)</name>
        <dbReference type="ChEBI" id="CHEBI:18420"/>
        <label>1</label>
        <note>catalytic</note>
    </ligand>
</feature>
<feature type="binding site" evidence="8">
    <location>
        <position position="728"/>
    </location>
    <ligand>
        <name>Mg(2+)</name>
        <dbReference type="ChEBI" id="CHEBI:18420"/>
        <label>1</label>
        <note>catalytic</note>
    </ligand>
</feature>
<feature type="binding site" evidence="9">
    <location>
        <position position="1005"/>
    </location>
    <ligand>
        <name>Mg(2+)</name>
        <dbReference type="ChEBI" id="CHEBI:18420"/>
        <label>2</label>
    </ligand>
</feature>
<feature type="binding site" evidence="9">
    <location>
        <position position="1036"/>
    </location>
    <ligand>
        <name>Mg(2+)</name>
        <dbReference type="ChEBI" id="CHEBI:18420"/>
        <label>2</label>
    </ligand>
</feature>
<feature type="binding site" evidence="9">
    <location>
        <position position="1057"/>
    </location>
    <ligand>
        <name>Mg(2+)</name>
        <dbReference type="ChEBI" id="CHEBI:18420"/>
        <label>2</label>
    </ligand>
</feature>
<feature type="binding site" evidence="9">
    <location>
        <position position="1118"/>
    </location>
    <ligand>
        <name>Mg(2+)</name>
        <dbReference type="ChEBI" id="CHEBI:18420"/>
        <label>2</label>
    </ligand>
</feature>
<feature type="binding site" evidence="10">
    <location>
        <position position="1190"/>
    </location>
    <ligand>
        <name>Mg(2+)</name>
        <dbReference type="ChEBI" id="CHEBI:18420"/>
        <label>3</label>
        <note>catalytic</note>
    </ligand>
</feature>
<feature type="binding site" evidence="10">
    <location>
        <position position="1247"/>
    </location>
    <ligand>
        <name>Mg(2+)</name>
        <dbReference type="ChEBI" id="CHEBI:18420"/>
        <label>3</label>
        <note>catalytic</note>
    </ligand>
</feature>
<feature type="site" description="Cleavage; by viral protease" evidence="2">
    <location>
        <begin position="109"/>
        <end position="110"/>
    </location>
</feature>
<feature type="site" description="Cleavage; by viral protease" evidence="2">
    <location>
        <begin position="323"/>
        <end position="324"/>
    </location>
</feature>
<feature type="site" description="Cleavage; by viral protease" evidence="2">
    <location>
        <begin position="419"/>
        <end position="420"/>
    </location>
</feature>
<feature type="site" description="Cleavage; by viral protease" evidence="2">
    <location>
        <begin position="544"/>
        <end position="545"/>
    </location>
</feature>
<feature type="site" description="Cleavage; by viral protease" evidence="2">
    <location>
        <begin position="1120"/>
        <end position="1121"/>
    </location>
</feature>
<feature type="lipid moiety-binding region" description="N-myristoyl glycine; by host" evidence="5">
    <location>
        <position position="2"/>
    </location>
</feature>
<feature type="mutagenesis site" description="Greatly reduced release of new viral particles." evidence="12">
    <original>PPPY</original>
    <variation>AAAA</variation>
    <location>
        <begin position="100"/>
        <end position="103"/>
    </location>
</feature>
<dbReference type="EC" id="3.4.23.-" evidence="7"/>
<dbReference type="EC" id="2.7.7.49" evidence="8"/>
<dbReference type="EC" id="2.7.7.7" evidence="8"/>
<dbReference type="EC" id="3.1.26.4" evidence="9"/>
<dbReference type="EC" id="2.7.7.-" evidence="4"/>
<dbReference type="EC" id="3.1.-.-" evidence="4"/>
<dbReference type="EMBL" id="D00647">
    <property type="protein sequence ID" value="BAA00544.1"/>
    <property type="status" value="ALT_SEQ"/>
    <property type="molecule type" value="Genomic_DNA"/>
</dbReference>
<dbReference type="PIR" id="JQ0555">
    <property type="entry name" value="GNLJGA"/>
</dbReference>
<dbReference type="SMR" id="P25059"/>
<dbReference type="GO" id="GO:0019013">
    <property type="term" value="C:viral nucleocapsid"/>
    <property type="evidence" value="ECO:0007669"/>
    <property type="project" value="UniProtKB-KW"/>
</dbReference>
<dbReference type="GO" id="GO:0004190">
    <property type="term" value="F:aspartic-type endopeptidase activity"/>
    <property type="evidence" value="ECO:0007669"/>
    <property type="project" value="UniProtKB-KW"/>
</dbReference>
<dbReference type="GO" id="GO:0003677">
    <property type="term" value="F:DNA binding"/>
    <property type="evidence" value="ECO:0007669"/>
    <property type="project" value="UniProtKB-KW"/>
</dbReference>
<dbReference type="GO" id="GO:0003887">
    <property type="term" value="F:DNA-directed DNA polymerase activity"/>
    <property type="evidence" value="ECO:0007669"/>
    <property type="project" value="UniProtKB-EC"/>
</dbReference>
<dbReference type="GO" id="GO:0035613">
    <property type="term" value="F:RNA stem-loop binding"/>
    <property type="evidence" value="ECO:0007669"/>
    <property type="project" value="TreeGrafter"/>
</dbReference>
<dbReference type="GO" id="GO:0003964">
    <property type="term" value="F:RNA-directed DNA polymerase activity"/>
    <property type="evidence" value="ECO:0007669"/>
    <property type="project" value="UniProtKB-KW"/>
</dbReference>
<dbReference type="GO" id="GO:0004523">
    <property type="term" value="F:RNA-DNA hybrid ribonuclease activity"/>
    <property type="evidence" value="ECO:0007669"/>
    <property type="project" value="UniProtKB-EC"/>
</dbReference>
<dbReference type="GO" id="GO:0039660">
    <property type="term" value="F:structural constituent of virion"/>
    <property type="evidence" value="ECO:0007669"/>
    <property type="project" value="UniProtKB-KW"/>
</dbReference>
<dbReference type="GO" id="GO:0008270">
    <property type="term" value="F:zinc ion binding"/>
    <property type="evidence" value="ECO:0007669"/>
    <property type="project" value="UniProtKB-KW"/>
</dbReference>
<dbReference type="GO" id="GO:0015074">
    <property type="term" value="P:DNA integration"/>
    <property type="evidence" value="ECO:0007669"/>
    <property type="project" value="UniProtKB-KW"/>
</dbReference>
<dbReference type="GO" id="GO:0006310">
    <property type="term" value="P:DNA recombination"/>
    <property type="evidence" value="ECO:0007669"/>
    <property type="project" value="UniProtKB-KW"/>
</dbReference>
<dbReference type="GO" id="GO:0075713">
    <property type="term" value="P:establishment of integrated proviral latency"/>
    <property type="evidence" value="ECO:0007669"/>
    <property type="project" value="UniProtKB-KW"/>
</dbReference>
<dbReference type="GO" id="GO:0006508">
    <property type="term" value="P:proteolysis"/>
    <property type="evidence" value="ECO:0007669"/>
    <property type="project" value="UniProtKB-KW"/>
</dbReference>
<dbReference type="GO" id="GO:0046718">
    <property type="term" value="P:symbiont entry into host cell"/>
    <property type="evidence" value="ECO:0007669"/>
    <property type="project" value="UniProtKB-KW"/>
</dbReference>
<dbReference type="GO" id="GO:0039702">
    <property type="term" value="P:viral budding via host ESCRT complex"/>
    <property type="evidence" value="ECO:0007669"/>
    <property type="project" value="UniProtKB-KW"/>
</dbReference>
<dbReference type="GO" id="GO:0044826">
    <property type="term" value="P:viral genome integration into host DNA"/>
    <property type="evidence" value="ECO:0007669"/>
    <property type="project" value="UniProtKB-KW"/>
</dbReference>
<dbReference type="GO" id="GO:0075523">
    <property type="term" value="P:viral translational frameshifting"/>
    <property type="evidence" value="ECO:0007669"/>
    <property type="project" value="UniProtKB-KW"/>
</dbReference>
<dbReference type="FunFam" id="4.10.60.10:FF:000119">
    <property type="entry name" value="Gag polyprotein"/>
    <property type="match status" value="1"/>
</dbReference>
<dbReference type="FunFam" id="1.10.375.10:FF:000005">
    <property type="entry name" value="Gag-pro-pol polyprotein"/>
    <property type="match status" value="1"/>
</dbReference>
<dbReference type="Gene3D" id="1.10.1200.30">
    <property type="match status" value="1"/>
</dbReference>
<dbReference type="Gene3D" id="3.30.70.270">
    <property type="match status" value="2"/>
</dbReference>
<dbReference type="Gene3D" id="2.40.70.10">
    <property type="entry name" value="Acid Proteases"/>
    <property type="match status" value="1"/>
</dbReference>
<dbReference type="Gene3D" id="3.10.10.10">
    <property type="entry name" value="HIV Type 1 Reverse Transcriptase, subunit A, domain 1"/>
    <property type="match status" value="1"/>
</dbReference>
<dbReference type="Gene3D" id="1.10.375.10">
    <property type="entry name" value="Human Immunodeficiency Virus Type 1 Capsid Protein"/>
    <property type="match status" value="1"/>
</dbReference>
<dbReference type="Gene3D" id="3.30.420.10">
    <property type="entry name" value="Ribonuclease H-like superfamily/Ribonuclease H"/>
    <property type="match status" value="2"/>
</dbReference>
<dbReference type="Gene3D" id="4.10.60.10">
    <property type="entry name" value="Zinc finger, CCHC-type"/>
    <property type="match status" value="1"/>
</dbReference>
<dbReference type="InterPro" id="IPR003139">
    <property type="entry name" value="D_retro_matrix"/>
</dbReference>
<dbReference type="InterPro" id="IPR043502">
    <property type="entry name" value="DNA/RNA_pol_sf"/>
</dbReference>
<dbReference type="InterPro" id="IPR045345">
    <property type="entry name" value="Gag_p24_C"/>
</dbReference>
<dbReference type="InterPro" id="IPR001037">
    <property type="entry name" value="Integrase_C_retrovir"/>
</dbReference>
<dbReference type="InterPro" id="IPR001584">
    <property type="entry name" value="Integrase_cat-core"/>
</dbReference>
<dbReference type="InterPro" id="IPR001995">
    <property type="entry name" value="Peptidase_A2_cat"/>
</dbReference>
<dbReference type="InterPro" id="IPR021109">
    <property type="entry name" value="Peptidase_aspartic_dom_sf"/>
</dbReference>
<dbReference type="InterPro" id="IPR018061">
    <property type="entry name" value="Retropepsins"/>
</dbReference>
<dbReference type="InterPro" id="IPR008916">
    <property type="entry name" value="Retrov_capsid_C"/>
</dbReference>
<dbReference type="InterPro" id="IPR008919">
    <property type="entry name" value="Retrov_capsid_N"/>
</dbReference>
<dbReference type="InterPro" id="IPR010999">
    <property type="entry name" value="Retrovr_matrix"/>
</dbReference>
<dbReference type="InterPro" id="IPR043128">
    <property type="entry name" value="Rev_trsase/Diguanyl_cyclase"/>
</dbReference>
<dbReference type="InterPro" id="IPR012337">
    <property type="entry name" value="RNaseH-like_sf"/>
</dbReference>
<dbReference type="InterPro" id="IPR002156">
    <property type="entry name" value="RNaseH_domain"/>
</dbReference>
<dbReference type="InterPro" id="IPR036397">
    <property type="entry name" value="RNaseH_sf"/>
</dbReference>
<dbReference type="InterPro" id="IPR000477">
    <property type="entry name" value="RT_dom"/>
</dbReference>
<dbReference type="InterPro" id="IPR001878">
    <property type="entry name" value="Znf_CCHC"/>
</dbReference>
<dbReference type="InterPro" id="IPR036875">
    <property type="entry name" value="Znf_CCHC_sf"/>
</dbReference>
<dbReference type="PANTHER" id="PTHR41694">
    <property type="entry name" value="ENDOGENOUS RETROVIRUS GROUP K MEMBER POL PROTEIN"/>
    <property type="match status" value="1"/>
</dbReference>
<dbReference type="PANTHER" id="PTHR41694:SF3">
    <property type="entry name" value="RNA-DIRECTED DNA POLYMERASE-RELATED"/>
    <property type="match status" value="1"/>
</dbReference>
<dbReference type="Pfam" id="PF02228">
    <property type="entry name" value="Gag_p19"/>
    <property type="match status" value="1"/>
</dbReference>
<dbReference type="Pfam" id="PF00607">
    <property type="entry name" value="Gag_p24"/>
    <property type="match status" value="1"/>
</dbReference>
<dbReference type="Pfam" id="PF19317">
    <property type="entry name" value="Gag_p24_C"/>
    <property type="match status" value="1"/>
</dbReference>
<dbReference type="Pfam" id="PF00552">
    <property type="entry name" value="IN_DBD_C"/>
    <property type="match status" value="1"/>
</dbReference>
<dbReference type="Pfam" id="PF00075">
    <property type="entry name" value="RNase_H"/>
    <property type="match status" value="1"/>
</dbReference>
<dbReference type="Pfam" id="PF00665">
    <property type="entry name" value="rve"/>
    <property type="match status" value="1"/>
</dbReference>
<dbReference type="Pfam" id="PF00077">
    <property type="entry name" value="RVP"/>
    <property type="match status" value="1"/>
</dbReference>
<dbReference type="Pfam" id="PF00078">
    <property type="entry name" value="RVT_1"/>
    <property type="match status" value="1"/>
</dbReference>
<dbReference type="Pfam" id="PF00098">
    <property type="entry name" value="zf-CCHC"/>
    <property type="match status" value="1"/>
</dbReference>
<dbReference type="SMART" id="SM00343">
    <property type="entry name" value="ZnF_C2HC"/>
    <property type="match status" value="2"/>
</dbReference>
<dbReference type="SUPFAM" id="SSF50630">
    <property type="entry name" value="Acid proteases"/>
    <property type="match status" value="1"/>
</dbReference>
<dbReference type="SUPFAM" id="SSF56672">
    <property type="entry name" value="DNA/RNA polymerases"/>
    <property type="match status" value="1"/>
</dbReference>
<dbReference type="SUPFAM" id="SSF47836">
    <property type="entry name" value="Retroviral matrix proteins"/>
    <property type="match status" value="1"/>
</dbReference>
<dbReference type="SUPFAM" id="SSF47353">
    <property type="entry name" value="Retrovirus capsid dimerization domain-like"/>
    <property type="match status" value="1"/>
</dbReference>
<dbReference type="SUPFAM" id="SSF47943">
    <property type="entry name" value="Retrovirus capsid protein, N-terminal core domain"/>
    <property type="match status" value="1"/>
</dbReference>
<dbReference type="SUPFAM" id="SSF57756">
    <property type="entry name" value="Retrovirus zinc finger-like domains"/>
    <property type="match status" value="1"/>
</dbReference>
<dbReference type="SUPFAM" id="SSF53098">
    <property type="entry name" value="Ribonuclease H-like"/>
    <property type="match status" value="1"/>
</dbReference>
<dbReference type="PROSITE" id="PS50175">
    <property type="entry name" value="ASP_PROT_RETROV"/>
    <property type="match status" value="1"/>
</dbReference>
<dbReference type="PROSITE" id="PS00141">
    <property type="entry name" value="ASP_PROTEASE"/>
    <property type="match status" value="1"/>
</dbReference>
<dbReference type="PROSITE" id="PS50994">
    <property type="entry name" value="INTEGRASE"/>
    <property type="match status" value="1"/>
</dbReference>
<dbReference type="PROSITE" id="PS51027">
    <property type="entry name" value="INTEGRASE_DBD"/>
    <property type="match status" value="1"/>
</dbReference>
<dbReference type="PROSITE" id="PS50879">
    <property type="entry name" value="RNASE_H_1"/>
    <property type="match status" value="1"/>
</dbReference>
<dbReference type="PROSITE" id="PS50878">
    <property type="entry name" value="RT_POL"/>
    <property type="match status" value="1"/>
</dbReference>
<dbReference type="PROSITE" id="PS50158">
    <property type="entry name" value="ZF_CCHC"/>
    <property type="match status" value="1"/>
</dbReference>
<comment type="function">
    <molecule>Gag-Pro-Pol polyprotein</molecule>
    <text evidence="2">The matrix domain targets Gag, Gag-Pro and Gag-Pro-Pol polyproteins to the plasma membrane via a multipartite membrane binding signal, that includes its myristoylated N-terminus.</text>
</comment>
<comment type="function">
    <molecule>Matrix protein p15</molecule>
    <text evidence="2">Matrix protein.</text>
</comment>
<comment type="function">
    <molecule>Capsid protein p24</molecule>
    <text evidence="3">Forms the spherical core of the virus that encapsulates the genomic RNA-nucleocapsid complex.</text>
</comment>
<comment type="function">
    <molecule>Nucleocapsid protein p12-pro</molecule>
    <text evidence="2">Binds strongly to viral nucleic acids and promote their aggregation. Also destabilizes the nucleic acids duplexes via highly structured zinc-binding motifs.</text>
</comment>
<comment type="function">
    <molecule>Protease</molecule>
    <text evidence="7">The aspartyl protease mediates proteolytic cleavages of Gag and Gag-Pol polyproteins during or shortly after the release of the virion from the plasma membrane. Cleavages take place as an ordered, step-wise cascade to yield mature proteins. This process is called maturation. Displays maximal activity during the budding process just prior to particle release from the cell.</text>
</comment>
<comment type="function">
    <molecule>Reverse transcriptase/ribonuclease H</molecule>
    <text evidence="1">RT is a multifunctional enzyme that converts the viral RNA genome into dsDNA in the cytoplasm, shortly after virus entry into the cell. This enzyme displays a DNA polymerase activity that can copy either DNA or RNA templates, and a ribonuclease H (RNase H) activity that cleaves the RNA strand of RNA-DNA heteroduplexes in a partially processive 3' to 5'-endonucleasic mode. Conversion of viral genomic RNA into dsDNA requires many steps. A tRNA-Pro binds to the primer-binding site (PBS) situated at the 5'-end of the viral RNA. RT uses the 3' end of the tRNA primer to perform a short round of RNA-dependent minus-strand DNA synthesis. The reading proceeds through the U5 region and ends after the repeated (R) region which is present at both ends of viral RNA. The portion of the RNA-DNA heteroduplex is digested by the RNase H, resulting in a ssDNA product attached to the tRNA primer. This ssDNA/tRNA hybridizes with the identical R region situated at the 3' end of viral RNA. This template exchange, known as minus-strand DNA strong stop transfer, can be either intra- or intermolecular. RT uses the 3' end of this newly synthesized short ssDNA to perform the RNA-dependent minus-strand DNA synthesis of the whole template. RNase H digests the RNA template except for a polypurine tract (PPT) situated at the 5' end of the genome. It is not clear if both polymerase and RNase H activities are simultaneous. RNase H probably can proceed both in a polymerase-dependent (RNA cut into small fragments by the same RT performing DNA synthesis) and a polymerase-independent mode (cleavage of remaining RNA fragments by free RTs). Secondly, RT performs DNA-directed plus-strand DNA synthesis using the PPT that has not been removed by RNase H as primer. PPT and tRNA primers are then removed by RNase H. The 3' and 5' ssDNA PBS regions hybridize to form a circular dsDNA intermediate. Strand displacement synthesis by RT to the PBS and PPT ends produces a blunt ended, linear dsDNA copy of the viral genome that includes long terminal repeats (LTRs) at both ends.</text>
</comment>
<comment type="function">
    <molecule>Integrase</molecule>
    <text evidence="3">Catalyzes viral DNA integration into the host chromosome, by performing a series of DNA cutting and joining reactions.</text>
</comment>
<comment type="catalytic activity">
    <reaction evidence="9">
        <text>Endonucleolytic cleavage to 5'-phosphomonoester.</text>
        <dbReference type="EC" id="3.1.26.4"/>
    </reaction>
</comment>
<comment type="catalytic activity">
    <reaction evidence="8">
        <text>DNA(n) + a 2'-deoxyribonucleoside 5'-triphosphate = DNA(n+1) + diphosphate</text>
        <dbReference type="Rhea" id="RHEA:22508"/>
        <dbReference type="Rhea" id="RHEA-COMP:17339"/>
        <dbReference type="Rhea" id="RHEA-COMP:17340"/>
        <dbReference type="ChEBI" id="CHEBI:33019"/>
        <dbReference type="ChEBI" id="CHEBI:61560"/>
        <dbReference type="ChEBI" id="CHEBI:173112"/>
        <dbReference type="EC" id="2.7.7.49"/>
    </reaction>
</comment>
<comment type="catalytic activity">
    <reaction evidence="8">
        <text>DNA(n) + a 2'-deoxyribonucleoside 5'-triphosphate = DNA(n+1) + diphosphate</text>
        <dbReference type="Rhea" id="RHEA:22508"/>
        <dbReference type="Rhea" id="RHEA-COMP:17339"/>
        <dbReference type="Rhea" id="RHEA-COMP:17340"/>
        <dbReference type="ChEBI" id="CHEBI:33019"/>
        <dbReference type="ChEBI" id="CHEBI:61560"/>
        <dbReference type="ChEBI" id="CHEBI:173112"/>
        <dbReference type="EC" id="2.7.7.7"/>
    </reaction>
</comment>
<comment type="cofactor">
    <cofactor evidence="8">
        <name>Mg(2+)</name>
        <dbReference type="ChEBI" id="CHEBI:18420"/>
    </cofactor>
    <text evidence="8">The RT polymerase active site binds 2 magnesium ions.</text>
</comment>
<comment type="subunit">
    <molecule>Gag-Pro-Pol polyprotein</molecule>
    <text evidence="2">Homodimer; the homodimers are part of the immature particles. Interacts with human TSG101 and NEDD4; these interactions are essential for budding and release of viral particles.</text>
</comment>
<comment type="subunit">
    <molecule>Matrix protein p15</molecule>
    <text evidence="2">Homodimer; further assembles as homohexamers.</text>
</comment>
<comment type="subcellular location">
    <molecule>Matrix protein p15</molecule>
    <subcellularLocation>
        <location evidence="2">Virion</location>
    </subcellularLocation>
</comment>
<comment type="subcellular location">
    <molecule>Capsid protein p24</molecule>
    <subcellularLocation>
        <location evidence="2">Virion</location>
    </subcellularLocation>
</comment>
<comment type="subcellular location">
    <molecule>Nucleocapsid protein p12-pro</molecule>
    <subcellularLocation>
        <location evidence="2">Virion</location>
    </subcellularLocation>
</comment>
<comment type="alternative products">
    <event type="ribosomal frameshifting"/>
    <isoform>
        <id>P25059-1</id>
        <name>Gag-Pro-Pol polyprotein</name>
        <sequence type="displayed"/>
    </isoform>
    <isoform>
        <id>P25058-1</id>
        <name>Gag polyprotein</name>
        <sequence type="external"/>
    </isoform>
    <isoform>
        <id>P0DOI1-1</id>
        <name>Gag-Pro polyprotein</name>
        <sequence type="external"/>
    </isoform>
</comment>
<comment type="domain">
    <molecule>Gag-Pro-Pol polyprotein</molecule>
    <text evidence="12">Late-budding domains (L domains) are short sequence motifs essential for viral particle release. They can occur individually or in close proximity within structural proteins. They interacts with sorting cellular proteins of the multivesicular body (MVB) pathway. Most of these proteins are class E vacuolar protein sorting factors belonging to ESCRT-I, ESCRT-II or ESCRT-III complexes. Matrix protein p15 contains one L domain: a PPXY motif which binds to the WW domains of the ubiquitin ligase NEDD4.</text>
</comment>
<comment type="PTM">
    <molecule>Matrix protein p15</molecule>
    <text evidence="2">Phosphorylation of the matrix protein p15 by MAPK1 seems to play a role in budding.</text>
</comment>
<comment type="PTM">
    <molecule>Gag-Pro-Pol polyprotein</molecule>
    <text evidence="2">Myristoylated. Myristoylation of the matrix (MA) domain mediates the transport and binding of Gag polyproteins to the host plasma membrane and is required for the assembly of viral particles.</text>
</comment>
<comment type="PTM">
    <molecule>Gag-Pro-Pol polyprotein</molecule>
    <text evidence="3">Specific enzymatic cleavages by the viral protease yield mature proteins. The polyprotein is cleaved during and after budding, this process is termed maturation. The protease is autoproteolytically processed at its N- and C-termini.</text>
</comment>
<comment type="miscellaneous">
    <molecule>Reverse transcriptase/ribonuclease H</molecule>
    <text evidence="8">The reverse transcriptase is an error-prone enzyme that lacks a proof-reading function. High mutations rate is a direct consequence of this characteristic. RT also displays frequent template switching leading to high recombination rate. Recombination mostly occurs between homologous regions of the two copackaged RNA genomes. If these two RNA molecules derive from different viral strains, reverse transcription will give rise to highly recombinated proviral DNAs.</text>
</comment>
<comment type="miscellaneous">
    <molecule>Isoform Gag-Pro-Pol polyprotein</molecule>
    <text evidence="13">Produced by -1 ribosomal frameshiftings between gag-pro and pro-pol.</text>
</comment>
<comment type="similarity">
    <text evidence="14">Belongs to the retroviral Pol polyprotein family.</text>
</comment>
<comment type="sequence caution" evidence="14">
    <conflict type="erroneous gene model prediction">
        <sequence resource="EMBL-CDS" id="BAA00544"/>
    </conflict>
</comment>
<protein>
    <recommendedName>
        <fullName>Gag-Pro-Pol polyprotein</fullName>
    </recommendedName>
    <component>
        <recommendedName>
            <fullName>Matrix protein p15</fullName>
            <shortName>MA</shortName>
        </recommendedName>
    </component>
    <component>
        <recommendedName>
            <fullName>Capsid protein p24</fullName>
            <shortName>CA</shortName>
        </recommendedName>
    </component>
    <component>
        <recommendedName>
            <fullName>Nucleocapsid protein p12-pro</fullName>
        </recommendedName>
    </component>
    <component>
        <recommendedName>
            <fullName>Protease</fullName>
            <ecNumber evidence="7">3.4.23.-</ecNumber>
        </recommendedName>
    </component>
    <component>
        <recommendedName>
            <fullName>Reverse transcriptase/ribonuclease H</fullName>
            <shortName>RT</shortName>
            <ecNumber evidence="8">2.7.7.49</ecNumber>
            <ecNumber evidence="8">2.7.7.7</ecNumber>
            <ecNumber evidence="9">3.1.26.4</ecNumber>
        </recommendedName>
    </component>
    <component>
        <recommendedName>
            <fullName>Integrase</fullName>
            <shortName>IN</shortName>
            <ecNumber evidence="4">2.7.7.-</ecNumber>
            <ecNumber evidence="4">3.1.-.-</ecNumber>
        </recommendedName>
    </component>
</protein>
<reference key="1">
    <citation type="journal article" date="1990" name="J. Gen. Virol.">
        <title>Molecular cloning and sequencing of an Australian isolate of proviral bovine leukaemia virus DNA: comparison with other isolates.</title>
        <authorList>
            <person name="Coulston J."/>
            <person name="Naif H."/>
            <person name="Brandon R."/>
            <person name="Kumar S."/>
            <person name="Khan S."/>
            <person name="Daniel R.C.W."/>
            <person name="Lavin M.F."/>
        </authorList>
    </citation>
    <scope>NUCLEOTIDE SEQUENCE [GENOMIC DNA]</scope>
</reference>
<reference key="2">
    <citation type="journal article" date="1984" name="FEBS Lett.">
        <title>Identification of a potential protease-coding gene in the genomes of bovine leukemia and human T-cell leukemia viruses.</title>
        <authorList>
            <person name="Sagata N."/>
            <person name="Yasunaga T."/>
            <person name="Ikawa Y."/>
        </authorList>
    </citation>
    <scope>RIBOSOMAL FRAMESHIFT</scope>
</reference>
<reference key="3">
    <citation type="journal article" date="2002" name="J. Virol.">
        <title>Analysis of bovine leukemia virus gag membrane targeting and late domain function.</title>
        <authorList>
            <person name="Wang H."/>
            <person name="Norris K.M."/>
            <person name="Mansky L.M."/>
        </authorList>
    </citation>
    <scope>DOMAIN LATE-BUDDING</scope>
    <scope>MUTAGENESIS OF 100-PRO--TYR-103</scope>
</reference>
<sequence>MGNSPSYNPPAGISPSDWLNLLQSAQRLNPRPSPSDFTDLKNYIHWFHKTQKKPWTFTSGGPASCPPGKFGRVPLVLATLNEVLSNDEGAPGASAPEEQPPPYDPPAVLPIISEGNRNRHRAWALRELQDIKKEIENKAPGSQVWIQTLRLAILQADPTPADLEQLCQYIASPVDQTAHMTSLTAAIAAEAANTLQGFNPQNGTLTQQSAQPNAGDLRSQYQNLWLQAWKNLPTRPSVQPWSTIVQGPAESYVEFVNRLQISLADNLPDGVPKEPIIDSLSYANANKECQQILQGRGLVAAPVGQKLQACAHWAPKTKQPAILVHTPGPKMPGPRQPAPKRPPPGPCYRCLKEGHWARDCPTKTTGPPPGPCPICKDPSHWKRDCPTLKSKKLIEGGPSAPQIITPITDSLSEAELECLLSIPLARSRPSVAVYLSGPWLQPSQNQALMLVDTGAENTVLPQNWLVRDYPRTPAAVLGAGGISRNRYNWLQGPLTLALKPEGPFITIPKILVDTFDKWQILGRDVLSRLQASISIPEEVHPPVVGVLDAPPSHIGLEHLPPPPEVPQFPLNLERLQALQDLVHRSLEAGYISPWDGPGNNPVFPVRKPNGAWRFVHDLRVTNALTKPIPALSPGPPDLTAIPTHLPHIICLDLKDAFFQIPVEDRFRSYFAFTLPTPGGLQPHRRFAWRVLPQGFINSPALFERALQEPLRQVSAAFSQSLLVSYMDDILYVSPTEEQRLQCYQTMAAHLRDLGFQVASEKTRQTPSPVPFLGQMVHERMVTYQSLPTLQISSPISLHQLQTVLGDLQWVSRGTPTTRRPLQLLYSSLKGIDDPRAIIHLSPEQQQGIAELRQALSHNARSRYNEQEPLLAYVHLTRAGSTLVLFQKGAQFPLAYFQTPLTDNQASPWGLLLLLGCQYLQAQALSSYAKTILKYYHNLPKTSLDNWIQSSEDPRVQELLQLWPQISSQGIQPPGPWKTLVTRAEVFLTPQFSPEPIPAALCLFSDGAARRGAYCLWKDHLLDFQAVPAPESAQKGELAGLLAGLAAAPPEPLNIWVDSKYLYSLLRTLVLGAWLQPDPVPSYALLYKSLLRHPAIFVGHVRSHSSASHPIASLNNYVDQLLPLETPEQWHKLTHCNSRALSRWPNPRISAWDPRSPATLCETCQRLNPTGGGKMRTIQRGWAPNHIWQADITHYKYKQFTYALHVFVDTYSGATHASAKRGLTTQTTIEGLLEAIVHLGRPKKLNTDQGANYTSKTFVRFCQQFGISLSHHVPYNPTSSGLVERTNGLLKLLLSKYHLDEPHLPMTQALSRALWTHNQINLLPILKTRWELHHSPPLAVISEGGETPKGSDKLFLYKLPGQNNRRWLGPLPALVEASGGALLATNPPVWVPWRLLKAFKCLKNDGPEDAPNRSSDG</sequence>
<organismHost>
    <name type="scientific">Bos taurus</name>
    <name type="common">Bovine</name>
    <dbReference type="NCBI Taxonomy" id="9913"/>
</organismHost>
<name>POL_BLVAU</name>
<keyword id="KW-0064">Aspartyl protease</keyword>
<keyword id="KW-0167">Capsid protein</keyword>
<keyword id="KW-0229">DNA integration</keyword>
<keyword id="KW-0233">DNA recombination</keyword>
<keyword id="KW-0238">DNA-binding</keyword>
<keyword id="KW-0255">Endonuclease</keyword>
<keyword id="KW-0945">Host-virus interaction</keyword>
<keyword id="KW-0378">Hydrolase</keyword>
<keyword id="KW-0449">Lipoprotein</keyword>
<keyword id="KW-0460">Magnesium</keyword>
<keyword id="KW-0479">Metal-binding</keyword>
<keyword id="KW-0511">Multifunctional enzyme</keyword>
<keyword id="KW-0519">Myristate</keyword>
<keyword id="KW-0540">Nuclease</keyword>
<keyword id="KW-0548">Nucleotidyltransferase</keyword>
<keyword id="KW-0597">Phosphoprotein</keyword>
<keyword id="KW-0645">Protease</keyword>
<keyword id="KW-0677">Repeat</keyword>
<keyword id="KW-0688">Ribosomal frameshifting</keyword>
<keyword id="KW-0695">RNA-directed DNA polymerase</keyword>
<keyword id="KW-0808">Transferase</keyword>
<keyword id="KW-1198">Viral budding</keyword>
<keyword id="KW-1187">Viral budding via the host ESCRT complexes</keyword>
<keyword id="KW-1179">Viral genome integration</keyword>
<keyword id="KW-0468">Viral matrix protein</keyword>
<keyword id="KW-0543">Viral nucleoprotein</keyword>
<keyword id="KW-1188">Viral release from host cell</keyword>
<keyword id="KW-0946">Virion</keyword>
<keyword id="KW-1160">Virus entry into host cell</keyword>
<keyword id="KW-0862">Zinc</keyword>
<keyword id="KW-0863">Zinc-finger</keyword>
<gene>
    <name type="primary">pol</name>
</gene>
<organism>
    <name type="scientific">Bovine leukemia virus (isolate Australian)</name>
    <name type="common">BLV</name>
    <dbReference type="NCBI Taxonomy" id="11903"/>
    <lineage>
        <taxon>Viruses</taxon>
        <taxon>Riboviria</taxon>
        <taxon>Pararnavirae</taxon>
        <taxon>Artverviricota</taxon>
        <taxon>Revtraviricetes</taxon>
        <taxon>Ortervirales</taxon>
        <taxon>Retroviridae</taxon>
        <taxon>Orthoretrovirinae</taxon>
        <taxon>Deltaretrovirus</taxon>
        <taxon>Bovine leukemia virus</taxon>
    </lineage>
</organism>